<feature type="chain" id="PRO_0000408217" description="Oxidant-induced cell-cycle arrest protein 5">
    <location>
        <begin position="1"/>
        <end position="679"/>
    </location>
</feature>
<feature type="domain" description="Rab-GAP TBC">
    <location>
        <begin position="50"/>
        <end position="441"/>
    </location>
</feature>
<feature type="region of interest" description="Disordered" evidence="2">
    <location>
        <begin position="135"/>
        <end position="159"/>
    </location>
</feature>
<feature type="region of interest" description="Disordered" evidence="2">
    <location>
        <begin position="250"/>
        <end position="271"/>
    </location>
</feature>
<feature type="region of interest" description="Disordered" evidence="2">
    <location>
        <begin position="524"/>
        <end position="544"/>
    </location>
</feature>
<feature type="compositionally biased region" description="Low complexity" evidence="2">
    <location>
        <begin position="135"/>
        <end position="153"/>
    </location>
</feature>
<feature type="compositionally biased region" description="Polar residues" evidence="2">
    <location>
        <begin position="524"/>
        <end position="539"/>
    </location>
</feature>
<evidence type="ECO:0000250" key="1"/>
<evidence type="ECO:0000256" key="2">
    <source>
        <dbReference type="SAM" id="MobiDB-lite"/>
    </source>
</evidence>
<evidence type="ECO:0000305" key="3"/>
<gene>
    <name type="primary">OCA5</name>
    <name type="ORF">SCRG_04674</name>
</gene>
<accession>B3LS90</accession>
<comment type="function">
    <text evidence="1">Required for replication of brome mosaic virus (BMV), a positive-strand RNA virus.</text>
</comment>
<comment type="subcellular location">
    <subcellularLocation>
        <location evidence="1">Cytoplasm</location>
    </subcellularLocation>
</comment>
<comment type="similarity">
    <text evidence="3">Belongs to the OCA5 family.</text>
</comment>
<dbReference type="EMBL" id="CH408053">
    <property type="protein sequence ID" value="EDV09021.1"/>
    <property type="molecule type" value="Genomic_DNA"/>
</dbReference>
<dbReference type="HOGENOM" id="CLU_028817_0_0_1"/>
<dbReference type="OrthoDB" id="41340at4893"/>
<dbReference type="Proteomes" id="UP000008335">
    <property type="component" value="Unassembled WGS sequence"/>
</dbReference>
<dbReference type="GO" id="GO:0005737">
    <property type="term" value="C:cytoplasm"/>
    <property type="evidence" value="ECO:0007669"/>
    <property type="project" value="UniProtKB-SubCell"/>
</dbReference>
<dbReference type="Gene3D" id="1.10.472.80">
    <property type="entry name" value="Ypt/Rab-GAP domain of gyp1p, domain 3"/>
    <property type="match status" value="1"/>
</dbReference>
<dbReference type="InterPro" id="IPR000195">
    <property type="entry name" value="Rab-GAP-TBC_dom"/>
</dbReference>
<dbReference type="InterPro" id="IPR035969">
    <property type="entry name" value="Rab-GAP_TBC_sf"/>
</dbReference>
<dbReference type="SMART" id="SM00164">
    <property type="entry name" value="TBC"/>
    <property type="match status" value="1"/>
</dbReference>
<dbReference type="SUPFAM" id="SSF47923">
    <property type="entry name" value="Ypt/Rab-GAP domain of gyp1p"/>
    <property type="match status" value="1"/>
</dbReference>
<proteinExistence type="inferred from homology"/>
<name>OCA5_YEAS1</name>
<sequence>MHDKKSPMANSHYLKNLKQQFRNKNLIETTIHLVKCNDHDSLAFLARTYGVPPQLRHVVWPILLKYHPMCISPNITSNTISWDPITNDFILNDPFLKSKAPTDKQDKSDDENILPYDIESIILHDLKKYFHSRSNPAGSSSNANTTNIATPTPVSSSDASTISSMEVLSPSLDYEFQIIETLKNAIVKFLLKWSKIFKYESGLAWIALGLAEWYPIYPYETMSPFNETHSFYEVEDYVVLSGRKHALLSTNNGNNGNSNSSSNNTNNNNTNITSGMHNLSINTNTSLHNSPYISHTLSYLYKEYPLPFELRSKLPTKPIFSFSALFERLALVILHCPDTILAHKQLKNDSNASSSSKANSNFNTNYFPIISGGDLSFQTQVFFKVFSSILPELYQPLTEESSLQPSSSRNSWIYWWLKCSGAKALQRQDRGRVWDLLLGWRPKPNMDTINFFLNYNDKKMDHLYHDTPQCDNEQYWMKDWIALYNNDPFWFPDLDSMALGSKKFPYDYSVFKELILRNRYGGTQSKAQKDNTVPSPGSDSNDKSELKLPFSSIDPHMQLIFIFIAILQFNEFKLLEFEEAEISEFLNNVPLLTKFDDSSYRKLYENTESSITSLPSSPTTSTMASLQSSSNSSAHISNYHMLIEVGNDAKASHCFDDLLNMAGDIWRKWLWRELEESSL</sequence>
<reference key="1">
    <citation type="submission" date="2005-03" db="EMBL/GenBank/DDBJ databases">
        <title>Annotation of the Saccharomyces cerevisiae RM11-1a genome.</title>
        <authorList>
            <consortium name="The Broad Institute Genome Sequencing Platform"/>
            <person name="Birren B.W."/>
            <person name="Lander E.S."/>
            <person name="Galagan J.E."/>
            <person name="Nusbaum C."/>
            <person name="Devon K."/>
            <person name="Cuomo C."/>
            <person name="Jaffe D.B."/>
            <person name="Butler J."/>
            <person name="Alvarez P."/>
            <person name="Gnerre S."/>
            <person name="Grabherr M."/>
            <person name="Kleber M."/>
            <person name="Mauceli E.W."/>
            <person name="Brockman W."/>
            <person name="MacCallum I.A."/>
            <person name="Rounsley S."/>
            <person name="Young S.K."/>
            <person name="LaButti K."/>
            <person name="Pushparaj V."/>
            <person name="DeCaprio D."/>
            <person name="Crawford M."/>
            <person name="Koehrsen M."/>
            <person name="Engels R."/>
            <person name="Montgomery P."/>
            <person name="Pearson M."/>
            <person name="Howarth C."/>
            <person name="Larson L."/>
            <person name="Luoma S."/>
            <person name="White J."/>
            <person name="O'Leary S."/>
            <person name="Kodira C.D."/>
            <person name="Zeng Q."/>
            <person name="Yandava C."/>
            <person name="Alvarado L."/>
            <person name="Pratt S."/>
            <person name="Kruglyak L."/>
        </authorList>
    </citation>
    <scope>NUCLEOTIDE SEQUENCE [LARGE SCALE GENOMIC DNA]</scope>
    <source>
        <strain>RM11-1a</strain>
    </source>
</reference>
<organism>
    <name type="scientific">Saccharomyces cerevisiae (strain RM11-1a)</name>
    <name type="common">Baker's yeast</name>
    <dbReference type="NCBI Taxonomy" id="285006"/>
    <lineage>
        <taxon>Eukaryota</taxon>
        <taxon>Fungi</taxon>
        <taxon>Dikarya</taxon>
        <taxon>Ascomycota</taxon>
        <taxon>Saccharomycotina</taxon>
        <taxon>Saccharomycetes</taxon>
        <taxon>Saccharomycetales</taxon>
        <taxon>Saccharomycetaceae</taxon>
        <taxon>Saccharomyces</taxon>
    </lineage>
</organism>
<keyword id="KW-0963">Cytoplasm</keyword>
<protein>
    <recommendedName>
        <fullName>Oxidant-induced cell-cycle arrest protein 5</fullName>
    </recommendedName>
</protein>